<evidence type="ECO:0000255" key="1">
    <source>
        <dbReference type="HAMAP-Rule" id="MF_00037"/>
    </source>
</evidence>
<keyword id="KW-0131">Cell cycle</keyword>
<keyword id="KW-0132">Cell division</keyword>
<keyword id="KW-0133">Cell shape</keyword>
<keyword id="KW-0961">Cell wall biogenesis/degradation</keyword>
<keyword id="KW-0963">Cytoplasm</keyword>
<keyword id="KW-0274">FAD</keyword>
<keyword id="KW-0285">Flavoprotein</keyword>
<keyword id="KW-0521">NADP</keyword>
<keyword id="KW-0560">Oxidoreductase</keyword>
<keyword id="KW-0573">Peptidoglycan synthesis</keyword>
<keyword id="KW-1185">Reference proteome</keyword>
<reference key="1">
    <citation type="journal article" date="2009" name="Appl. Environ. Microbiol.">
        <title>Genome analysis of the meat starter culture bacterium Staphylococcus carnosus TM300.</title>
        <authorList>
            <person name="Rosenstein R."/>
            <person name="Nerz C."/>
            <person name="Biswas L."/>
            <person name="Resch A."/>
            <person name="Raddatz G."/>
            <person name="Schuster S.C."/>
            <person name="Goetz F."/>
        </authorList>
    </citation>
    <scope>NUCLEOTIDE SEQUENCE [LARGE SCALE GENOMIC DNA]</scope>
    <source>
        <strain>TM300</strain>
    </source>
</reference>
<dbReference type="EC" id="1.3.1.98" evidence="1"/>
<dbReference type="EMBL" id="AM295250">
    <property type="protein sequence ID" value="CAL27300.1"/>
    <property type="molecule type" value="Genomic_DNA"/>
</dbReference>
<dbReference type="RefSeq" id="WP_015899645.1">
    <property type="nucleotide sequence ID" value="NC_012121.1"/>
</dbReference>
<dbReference type="SMR" id="B9DJN5"/>
<dbReference type="GeneID" id="93795316"/>
<dbReference type="KEGG" id="sca:SCA_0386"/>
<dbReference type="eggNOG" id="COG0812">
    <property type="taxonomic scope" value="Bacteria"/>
</dbReference>
<dbReference type="HOGENOM" id="CLU_035304_1_1_9"/>
<dbReference type="OrthoDB" id="9804753at2"/>
<dbReference type="BioCyc" id="SCAR396513:SCA_RS01970-MONOMER"/>
<dbReference type="UniPathway" id="UPA00219"/>
<dbReference type="Proteomes" id="UP000000444">
    <property type="component" value="Chromosome"/>
</dbReference>
<dbReference type="GO" id="GO:0005829">
    <property type="term" value="C:cytosol"/>
    <property type="evidence" value="ECO:0007669"/>
    <property type="project" value="TreeGrafter"/>
</dbReference>
<dbReference type="GO" id="GO:0071949">
    <property type="term" value="F:FAD binding"/>
    <property type="evidence" value="ECO:0007669"/>
    <property type="project" value="InterPro"/>
</dbReference>
<dbReference type="GO" id="GO:0008762">
    <property type="term" value="F:UDP-N-acetylmuramate dehydrogenase activity"/>
    <property type="evidence" value="ECO:0007669"/>
    <property type="project" value="UniProtKB-UniRule"/>
</dbReference>
<dbReference type="GO" id="GO:0051301">
    <property type="term" value="P:cell division"/>
    <property type="evidence" value="ECO:0007669"/>
    <property type="project" value="UniProtKB-KW"/>
</dbReference>
<dbReference type="GO" id="GO:0071555">
    <property type="term" value="P:cell wall organization"/>
    <property type="evidence" value="ECO:0007669"/>
    <property type="project" value="UniProtKB-KW"/>
</dbReference>
<dbReference type="GO" id="GO:0009252">
    <property type="term" value="P:peptidoglycan biosynthetic process"/>
    <property type="evidence" value="ECO:0007669"/>
    <property type="project" value="UniProtKB-UniRule"/>
</dbReference>
<dbReference type="GO" id="GO:0008360">
    <property type="term" value="P:regulation of cell shape"/>
    <property type="evidence" value="ECO:0007669"/>
    <property type="project" value="UniProtKB-KW"/>
</dbReference>
<dbReference type="FunFam" id="3.90.78.10:FF:000001">
    <property type="entry name" value="UDP-N-acetylenolpyruvoylglucosamine reductase"/>
    <property type="match status" value="1"/>
</dbReference>
<dbReference type="Gene3D" id="3.30.465.10">
    <property type="match status" value="1"/>
</dbReference>
<dbReference type="Gene3D" id="3.90.78.10">
    <property type="entry name" value="UDP-N-acetylenolpyruvoylglucosamine reductase, C-terminal domain"/>
    <property type="match status" value="1"/>
</dbReference>
<dbReference type="Gene3D" id="3.30.43.10">
    <property type="entry name" value="Uridine Diphospho-n-acetylenolpyruvylglucosamine Reductase, domain 2"/>
    <property type="match status" value="1"/>
</dbReference>
<dbReference type="HAMAP" id="MF_00037">
    <property type="entry name" value="MurB"/>
    <property type="match status" value="1"/>
</dbReference>
<dbReference type="InterPro" id="IPR016166">
    <property type="entry name" value="FAD-bd_PCMH"/>
</dbReference>
<dbReference type="InterPro" id="IPR036318">
    <property type="entry name" value="FAD-bd_PCMH-like_sf"/>
</dbReference>
<dbReference type="InterPro" id="IPR016167">
    <property type="entry name" value="FAD-bd_PCMH_sub1"/>
</dbReference>
<dbReference type="InterPro" id="IPR016169">
    <property type="entry name" value="FAD-bd_PCMH_sub2"/>
</dbReference>
<dbReference type="InterPro" id="IPR003170">
    <property type="entry name" value="MurB"/>
</dbReference>
<dbReference type="InterPro" id="IPR011601">
    <property type="entry name" value="MurB_C"/>
</dbReference>
<dbReference type="InterPro" id="IPR036635">
    <property type="entry name" value="MurB_C_sf"/>
</dbReference>
<dbReference type="InterPro" id="IPR006094">
    <property type="entry name" value="Oxid_FAD_bind_N"/>
</dbReference>
<dbReference type="NCBIfam" id="TIGR00179">
    <property type="entry name" value="murB"/>
    <property type="match status" value="1"/>
</dbReference>
<dbReference type="NCBIfam" id="NF010480">
    <property type="entry name" value="PRK13905.1"/>
    <property type="match status" value="1"/>
</dbReference>
<dbReference type="PANTHER" id="PTHR21071">
    <property type="entry name" value="UDP-N-ACETYLENOLPYRUVOYLGLUCOSAMINE REDUCTASE"/>
    <property type="match status" value="1"/>
</dbReference>
<dbReference type="PANTHER" id="PTHR21071:SF4">
    <property type="entry name" value="UDP-N-ACETYLENOLPYRUVOYLGLUCOSAMINE REDUCTASE"/>
    <property type="match status" value="1"/>
</dbReference>
<dbReference type="Pfam" id="PF01565">
    <property type="entry name" value="FAD_binding_4"/>
    <property type="match status" value="1"/>
</dbReference>
<dbReference type="Pfam" id="PF02873">
    <property type="entry name" value="MurB_C"/>
    <property type="match status" value="1"/>
</dbReference>
<dbReference type="SUPFAM" id="SSF56176">
    <property type="entry name" value="FAD-binding/transporter-associated domain-like"/>
    <property type="match status" value="1"/>
</dbReference>
<dbReference type="SUPFAM" id="SSF56194">
    <property type="entry name" value="Uridine diphospho-N-Acetylenolpyruvylglucosamine reductase, MurB, C-terminal domain"/>
    <property type="match status" value="1"/>
</dbReference>
<dbReference type="PROSITE" id="PS51387">
    <property type="entry name" value="FAD_PCMH"/>
    <property type="match status" value="1"/>
</dbReference>
<organism>
    <name type="scientific">Staphylococcus carnosus (strain TM300)</name>
    <dbReference type="NCBI Taxonomy" id="396513"/>
    <lineage>
        <taxon>Bacteria</taxon>
        <taxon>Bacillati</taxon>
        <taxon>Bacillota</taxon>
        <taxon>Bacilli</taxon>
        <taxon>Bacillales</taxon>
        <taxon>Staphylococcaceae</taxon>
        <taxon>Staphylococcus</taxon>
    </lineage>
</organism>
<name>MURB_STACT</name>
<feature type="chain" id="PRO_1000117136" description="UDP-N-acetylenolpyruvoylglucosamine reductase">
    <location>
        <begin position="1"/>
        <end position="308"/>
    </location>
</feature>
<feature type="domain" description="FAD-binding PCMH-type" evidence="1">
    <location>
        <begin position="33"/>
        <end position="197"/>
    </location>
</feature>
<feature type="active site" evidence="1">
    <location>
        <position position="176"/>
    </location>
</feature>
<feature type="active site" description="Proton donor" evidence="1">
    <location>
        <position position="226"/>
    </location>
</feature>
<feature type="active site" evidence="1">
    <location>
        <position position="296"/>
    </location>
</feature>
<accession>B9DJN5</accession>
<proteinExistence type="inferred from homology"/>
<comment type="function">
    <text evidence="1">Cell wall formation.</text>
</comment>
<comment type="catalytic activity">
    <reaction evidence="1">
        <text>UDP-N-acetyl-alpha-D-muramate + NADP(+) = UDP-N-acetyl-3-O-(1-carboxyvinyl)-alpha-D-glucosamine + NADPH + H(+)</text>
        <dbReference type="Rhea" id="RHEA:12248"/>
        <dbReference type="ChEBI" id="CHEBI:15378"/>
        <dbReference type="ChEBI" id="CHEBI:57783"/>
        <dbReference type="ChEBI" id="CHEBI:58349"/>
        <dbReference type="ChEBI" id="CHEBI:68483"/>
        <dbReference type="ChEBI" id="CHEBI:70757"/>
        <dbReference type="EC" id="1.3.1.98"/>
    </reaction>
</comment>
<comment type="cofactor">
    <cofactor evidence="1">
        <name>FAD</name>
        <dbReference type="ChEBI" id="CHEBI:57692"/>
    </cofactor>
</comment>
<comment type="pathway">
    <text evidence="1">Cell wall biogenesis; peptidoglycan biosynthesis.</text>
</comment>
<comment type="subcellular location">
    <subcellularLocation>
        <location evidence="1">Cytoplasm</location>
    </subcellularLocation>
</comment>
<comment type="similarity">
    <text evidence="1">Belongs to the MurB family.</text>
</comment>
<sequence>MHKDDILKELKKVLPEEIIKVDEPLKRYTYTQTGGNADFYLSPTTNEQVQAINHLARMNNIPVTYLGNGSNIIIREGGIRGIVLSLLSMDYIKVEDNVIIAGSGAAIIDVSRKARDYSLTGLEFACGIPGSIGGAVFMNAGAYGGEVRDCIEHAVCVNERGEIVTLTRDELELGYRSSIVQKQHLVVLEASFNLAPGNQEEIQSVMDDLTNRRETKQPLEYPSCGSVFQRPPGHFAGKLIQDSELQGHRIGGVEVSKKHAGFMVNVDNGTATDYEDLIHHVQNVVKEKFDVELHPEVRIIGDHPEEHQ</sequence>
<gene>
    <name evidence="1" type="primary">murB</name>
    <name type="ordered locus">Sca_0386</name>
</gene>
<protein>
    <recommendedName>
        <fullName evidence="1">UDP-N-acetylenolpyruvoylglucosamine reductase</fullName>
        <ecNumber evidence="1">1.3.1.98</ecNumber>
    </recommendedName>
    <alternativeName>
        <fullName evidence="1">UDP-N-acetylmuramate dehydrogenase</fullName>
    </alternativeName>
</protein>